<sequence>MTSIIYSPKDIFEQEFKTSMRGFDKKEVDEFLDNVIKDYENFNAQIEALKAENEALKKAKFQARNTVSATVQQPVPQPTRVAQSATNFDILKRISKLEKEVFGKQIIE</sequence>
<evidence type="ECO:0000255" key="1">
    <source>
        <dbReference type="HAMAP-Rule" id="MF_02011"/>
    </source>
</evidence>
<proteinExistence type="inferred from homology"/>
<accession>P0DB44</accession>
<accession>Q79Y53</accession>
<accession>Q7CEW0</accession>
<name>GPSB_STRP3</name>
<organism>
    <name type="scientific">Streptococcus pyogenes serotype M3 (strain ATCC BAA-595 / MGAS315)</name>
    <dbReference type="NCBI Taxonomy" id="198466"/>
    <lineage>
        <taxon>Bacteria</taxon>
        <taxon>Bacillati</taxon>
        <taxon>Bacillota</taxon>
        <taxon>Bacilli</taxon>
        <taxon>Lactobacillales</taxon>
        <taxon>Streptococcaceae</taxon>
        <taxon>Streptococcus</taxon>
    </lineage>
</organism>
<keyword id="KW-0131">Cell cycle</keyword>
<keyword id="KW-0132">Cell division</keyword>
<keyword id="KW-0133">Cell shape</keyword>
<keyword id="KW-0175">Coiled coil</keyword>
<keyword id="KW-0963">Cytoplasm</keyword>
<dbReference type="EMBL" id="AE014074">
    <property type="protein sequence ID" value="AAM79994.1"/>
    <property type="molecule type" value="Genomic_DNA"/>
</dbReference>
<dbReference type="RefSeq" id="WP_002983626.1">
    <property type="nucleotide sequence ID" value="NC_004070.1"/>
</dbReference>
<dbReference type="SMR" id="P0DB44"/>
<dbReference type="GeneID" id="69900485"/>
<dbReference type="KEGG" id="spg:SpyM3_1387"/>
<dbReference type="HOGENOM" id="CLU_140309_1_0_9"/>
<dbReference type="Proteomes" id="UP000000564">
    <property type="component" value="Chromosome"/>
</dbReference>
<dbReference type="GO" id="GO:0005737">
    <property type="term" value="C:cytoplasm"/>
    <property type="evidence" value="ECO:0007669"/>
    <property type="project" value="UniProtKB-SubCell"/>
</dbReference>
<dbReference type="GO" id="GO:0051301">
    <property type="term" value="P:cell division"/>
    <property type="evidence" value="ECO:0007669"/>
    <property type="project" value="UniProtKB-UniRule"/>
</dbReference>
<dbReference type="GO" id="GO:0008360">
    <property type="term" value="P:regulation of cell shape"/>
    <property type="evidence" value="ECO:0007669"/>
    <property type="project" value="UniProtKB-UniRule"/>
</dbReference>
<dbReference type="Gene3D" id="6.10.250.660">
    <property type="match status" value="1"/>
</dbReference>
<dbReference type="HAMAP" id="MF_02011">
    <property type="entry name" value="GpsB"/>
    <property type="match status" value="1"/>
</dbReference>
<dbReference type="InterPro" id="IPR011229">
    <property type="entry name" value="Cell_cycle_GpsB"/>
</dbReference>
<dbReference type="InterPro" id="IPR019933">
    <property type="entry name" value="DivIVA_domain"/>
</dbReference>
<dbReference type="InterPro" id="IPR007793">
    <property type="entry name" value="DivIVA_fam"/>
</dbReference>
<dbReference type="NCBIfam" id="TIGR03544">
    <property type="entry name" value="DivI1A_domain"/>
    <property type="match status" value="1"/>
</dbReference>
<dbReference type="NCBIfam" id="NF010725">
    <property type="entry name" value="PRK14127.1"/>
    <property type="match status" value="1"/>
</dbReference>
<dbReference type="PANTHER" id="PTHR35794:SF1">
    <property type="entry name" value="CELL CYCLE PROTEIN GPSB"/>
    <property type="match status" value="1"/>
</dbReference>
<dbReference type="PANTHER" id="PTHR35794">
    <property type="entry name" value="CELL DIVISION PROTEIN DIVIVA"/>
    <property type="match status" value="1"/>
</dbReference>
<dbReference type="Pfam" id="PF05103">
    <property type="entry name" value="DivIVA"/>
    <property type="match status" value="1"/>
</dbReference>
<dbReference type="PIRSF" id="PIRSF029938">
    <property type="entry name" value="UCP029938"/>
    <property type="match status" value="1"/>
</dbReference>
<reference key="1">
    <citation type="journal article" date="2002" name="Proc. Natl. Acad. Sci. U.S.A.">
        <title>Genome sequence of a serotype M3 strain of group A Streptococcus: phage-encoded toxins, the high-virulence phenotype, and clone emergence.</title>
        <authorList>
            <person name="Beres S.B."/>
            <person name="Sylva G.L."/>
            <person name="Barbian K.D."/>
            <person name="Lei B."/>
            <person name="Hoff J.S."/>
            <person name="Mammarella N.D."/>
            <person name="Liu M.-Y."/>
            <person name="Smoot J.C."/>
            <person name="Porcella S.F."/>
            <person name="Parkins L.D."/>
            <person name="Campbell D.S."/>
            <person name="Smith T.M."/>
            <person name="McCormick J.K."/>
            <person name="Leung D.Y.M."/>
            <person name="Schlievert P.M."/>
            <person name="Musser J.M."/>
        </authorList>
    </citation>
    <scope>NUCLEOTIDE SEQUENCE [LARGE SCALE GENOMIC DNA]</scope>
    <source>
        <strain>ATCC BAA-595 / MGAS315</strain>
    </source>
</reference>
<protein>
    <recommendedName>
        <fullName evidence="1">Cell cycle protein GpsB</fullName>
    </recommendedName>
    <alternativeName>
        <fullName evidence="1">Guiding PBP1-shuttling protein</fullName>
    </alternativeName>
</protein>
<feature type="chain" id="PRO_0000337962" description="Cell cycle protein GpsB">
    <location>
        <begin position="1"/>
        <end position="108"/>
    </location>
</feature>
<feature type="coiled-coil region" evidence="1">
    <location>
        <begin position="32"/>
        <end position="69"/>
    </location>
</feature>
<gene>
    <name evidence="1" type="primary">gpsB</name>
    <name type="ordered locus">SpyM3_1387</name>
</gene>
<comment type="function">
    <text evidence="1">Divisome component that associates with the complex late in its assembly, after the Z-ring is formed, and is dependent on DivIC and PBP2B for its recruitment to the divisome. Together with EzrA, is a key component of the system that regulates PBP1 localization during cell cycle progression. Its main role could be the removal of PBP1 from the cell pole after pole maturation is completed. Also contributes to the recruitment of PBP1 to the division complex. Not essential for septum formation.</text>
</comment>
<comment type="subunit">
    <text evidence="1">Forms polymers through the coiled coil domains. Interacts with PBP1, MreC and EzrA.</text>
</comment>
<comment type="subcellular location">
    <subcellularLocation>
        <location evidence="1">Cytoplasm</location>
    </subcellularLocation>
    <text evidence="1">Shuttles between the lateral wall and the division site in a cell cycle-dependent manner.</text>
</comment>
<comment type="similarity">
    <text evidence="1">Belongs to the GpsB family.</text>
</comment>